<gene>
    <name evidence="1" type="primary">rimK</name>
    <name type="ordered locus">EFER_0994</name>
</gene>
<reference key="1">
    <citation type="journal article" date="2009" name="PLoS Genet.">
        <title>Organised genome dynamics in the Escherichia coli species results in highly diverse adaptive paths.</title>
        <authorList>
            <person name="Touchon M."/>
            <person name="Hoede C."/>
            <person name="Tenaillon O."/>
            <person name="Barbe V."/>
            <person name="Baeriswyl S."/>
            <person name="Bidet P."/>
            <person name="Bingen E."/>
            <person name="Bonacorsi S."/>
            <person name="Bouchier C."/>
            <person name="Bouvet O."/>
            <person name="Calteau A."/>
            <person name="Chiapello H."/>
            <person name="Clermont O."/>
            <person name="Cruveiller S."/>
            <person name="Danchin A."/>
            <person name="Diard M."/>
            <person name="Dossat C."/>
            <person name="Karoui M.E."/>
            <person name="Frapy E."/>
            <person name="Garry L."/>
            <person name="Ghigo J.M."/>
            <person name="Gilles A.M."/>
            <person name="Johnson J."/>
            <person name="Le Bouguenec C."/>
            <person name="Lescat M."/>
            <person name="Mangenot S."/>
            <person name="Martinez-Jehanne V."/>
            <person name="Matic I."/>
            <person name="Nassif X."/>
            <person name="Oztas S."/>
            <person name="Petit M.A."/>
            <person name="Pichon C."/>
            <person name="Rouy Z."/>
            <person name="Ruf C.S."/>
            <person name="Schneider D."/>
            <person name="Tourret J."/>
            <person name="Vacherie B."/>
            <person name="Vallenet D."/>
            <person name="Medigue C."/>
            <person name="Rocha E.P.C."/>
            <person name="Denamur E."/>
        </authorList>
    </citation>
    <scope>NUCLEOTIDE SEQUENCE [LARGE SCALE GENOMIC DNA]</scope>
    <source>
        <strain>ATCC 35469 / DSM 13698 / BCRC 15582 / CCUG 18766 / IAM 14443 / JCM 21226 / LMG 7866 / NBRC 102419 / NCTC 12128 / CDC 0568-73</strain>
    </source>
</reference>
<comment type="function">
    <text evidence="1">An L-glutamate ligase that catalyzes the ATP-dependent post-translational addition of glutamate residues to the C-terminus of ribosomal protein bS6 (RpsF). Is also able to catalyze the synthesis of poly-alpha-glutamate in vitro, via ATP hydrolysis from unprotected glutamate as substrate. The number of glutamate residues added to either RpsF or to poly-alpha-glutamate changes with pH.</text>
</comment>
<comment type="cofactor">
    <cofactor evidence="1">
        <name>Mg(2+)</name>
        <dbReference type="ChEBI" id="CHEBI:18420"/>
    </cofactor>
    <cofactor evidence="1">
        <name>Mn(2+)</name>
        <dbReference type="ChEBI" id="CHEBI:29035"/>
    </cofactor>
    <text evidence="1">Binds 2 magnesium or manganese ions per subunit.</text>
</comment>
<comment type="similarity">
    <text evidence="1">Belongs to the RimK family.</text>
</comment>
<accession>B7LN16</accession>
<protein>
    <recommendedName>
        <fullName evidence="1">Ribosomal protein bS6--L-glutamate ligase</fullName>
        <ecNumber evidence="1">6.3.2.-</ecNumber>
    </recommendedName>
    <alternativeName>
        <fullName evidence="1">Poly-alpha-glutamate synthase</fullName>
    </alternativeName>
    <alternativeName>
        <fullName evidence="1">Ribosomal protein bS6 modification protein</fullName>
    </alternativeName>
</protein>
<keyword id="KW-0067">ATP-binding</keyword>
<keyword id="KW-0436">Ligase</keyword>
<keyword id="KW-0460">Magnesium</keyword>
<keyword id="KW-0464">Manganese</keyword>
<keyword id="KW-0479">Metal-binding</keyword>
<keyword id="KW-0547">Nucleotide-binding</keyword>
<keyword id="KW-0648">Protein biosynthesis</keyword>
<evidence type="ECO:0000255" key="1">
    <source>
        <dbReference type="HAMAP-Rule" id="MF_01552"/>
    </source>
</evidence>
<proteinExistence type="inferred from homology"/>
<name>RIMK_ESCF3</name>
<dbReference type="EC" id="6.3.2.-" evidence="1"/>
<dbReference type="EMBL" id="CU928158">
    <property type="protein sequence ID" value="CAQ88527.1"/>
    <property type="molecule type" value="Genomic_DNA"/>
</dbReference>
<dbReference type="RefSeq" id="WP_000684353.1">
    <property type="nucleotide sequence ID" value="NC_011740.1"/>
</dbReference>
<dbReference type="SMR" id="B7LN16"/>
<dbReference type="GeneID" id="75057951"/>
<dbReference type="KEGG" id="efe:EFER_0994"/>
<dbReference type="HOGENOM" id="CLU_054353_0_1_6"/>
<dbReference type="OrthoDB" id="3865600at2"/>
<dbReference type="Proteomes" id="UP000000745">
    <property type="component" value="Chromosome"/>
</dbReference>
<dbReference type="GO" id="GO:0005737">
    <property type="term" value="C:cytoplasm"/>
    <property type="evidence" value="ECO:0007669"/>
    <property type="project" value="TreeGrafter"/>
</dbReference>
<dbReference type="GO" id="GO:0005524">
    <property type="term" value="F:ATP binding"/>
    <property type="evidence" value="ECO:0007669"/>
    <property type="project" value="UniProtKB-UniRule"/>
</dbReference>
<dbReference type="GO" id="GO:0046872">
    <property type="term" value="F:metal ion binding"/>
    <property type="evidence" value="ECO:0007669"/>
    <property type="project" value="UniProtKB-KW"/>
</dbReference>
<dbReference type="GO" id="GO:0018169">
    <property type="term" value="F:ribosomal S6-glutamic acid ligase activity"/>
    <property type="evidence" value="ECO:0007669"/>
    <property type="project" value="UniProtKB-UniRule"/>
</dbReference>
<dbReference type="GO" id="GO:0036211">
    <property type="term" value="P:protein modification process"/>
    <property type="evidence" value="ECO:0007669"/>
    <property type="project" value="InterPro"/>
</dbReference>
<dbReference type="GO" id="GO:0009432">
    <property type="term" value="P:SOS response"/>
    <property type="evidence" value="ECO:0007669"/>
    <property type="project" value="TreeGrafter"/>
</dbReference>
<dbReference type="GO" id="GO:0006412">
    <property type="term" value="P:translation"/>
    <property type="evidence" value="ECO:0007669"/>
    <property type="project" value="UniProtKB-KW"/>
</dbReference>
<dbReference type="FunFam" id="3.40.50.20:FF:000004">
    <property type="entry name" value="Probable alpha-L-glutamate ligase"/>
    <property type="match status" value="1"/>
</dbReference>
<dbReference type="FunFam" id="3.30.1490.20:FF:000005">
    <property type="entry name" value="Probable alpha-L-glutamate ligase 1"/>
    <property type="match status" value="1"/>
</dbReference>
<dbReference type="FunFam" id="3.30.470.20:FF:000016">
    <property type="entry name" value="Ribosomal protein S6--L-glutamate ligase"/>
    <property type="match status" value="1"/>
</dbReference>
<dbReference type="Gene3D" id="3.40.50.20">
    <property type="match status" value="1"/>
</dbReference>
<dbReference type="Gene3D" id="3.30.1490.20">
    <property type="entry name" value="ATP-grasp fold, A domain"/>
    <property type="match status" value="1"/>
</dbReference>
<dbReference type="Gene3D" id="3.30.470.20">
    <property type="entry name" value="ATP-grasp fold, B domain"/>
    <property type="match status" value="1"/>
</dbReference>
<dbReference type="HAMAP" id="MF_01552">
    <property type="entry name" value="RimK"/>
    <property type="match status" value="1"/>
</dbReference>
<dbReference type="InterPro" id="IPR011761">
    <property type="entry name" value="ATP-grasp"/>
</dbReference>
<dbReference type="InterPro" id="IPR013651">
    <property type="entry name" value="ATP-grasp_RimK-type"/>
</dbReference>
<dbReference type="InterPro" id="IPR013815">
    <property type="entry name" value="ATP_grasp_subdomain_1"/>
</dbReference>
<dbReference type="InterPro" id="IPR023533">
    <property type="entry name" value="RimK"/>
</dbReference>
<dbReference type="InterPro" id="IPR041107">
    <property type="entry name" value="Rimk_N"/>
</dbReference>
<dbReference type="InterPro" id="IPR004666">
    <property type="entry name" value="Rp_bS6_RimK/Lys_biosynth_LsyX"/>
</dbReference>
<dbReference type="NCBIfam" id="NF007764">
    <property type="entry name" value="PRK10446.1"/>
    <property type="match status" value="1"/>
</dbReference>
<dbReference type="NCBIfam" id="TIGR00768">
    <property type="entry name" value="rimK_fam"/>
    <property type="match status" value="1"/>
</dbReference>
<dbReference type="PANTHER" id="PTHR21621:SF7">
    <property type="entry name" value="RIBOSOMAL PROTEIN BS6--L-GLUTAMATE LIGASE"/>
    <property type="match status" value="1"/>
</dbReference>
<dbReference type="PANTHER" id="PTHR21621">
    <property type="entry name" value="RIBOSOMAL PROTEIN S6 MODIFICATION PROTEIN"/>
    <property type="match status" value="1"/>
</dbReference>
<dbReference type="Pfam" id="PF08443">
    <property type="entry name" value="RimK"/>
    <property type="match status" value="1"/>
</dbReference>
<dbReference type="Pfam" id="PF18030">
    <property type="entry name" value="Rimk_N"/>
    <property type="match status" value="1"/>
</dbReference>
<dbReference type="SUPFAM" id="SSF56059">
    <property type="entry name" value="Glutathione synthetase ATP-binding domain-like"/>
    <property type="match status" value="1"/>
</dbReference>
<dbReference type="PROSITE" id="PS50975">
    <property type="entry name" value="ATP_GRASP"/>
    <property type="match status" value="1"/>
</dbReference>
<sequence length="300" mass="32533">MKIAILSRDGTLYSCKRLREAAIQRGHLVEVLDPLSCYMNINPAASSIHYKGRKLPHFDAVIPRIGSAITFYGTAALRQFEMLGSYPLNESVAIARARDKLRSMQLLARQGIDLPVTGIAHSPDDTSDLIDMVGGAPLVVKLVEGTQGIGVVLAETRQAAESVIDAFRGLNAHILVQEYIKEAKGRDIRCLVVGDEVVAAIERRAKEGDFRSNLHRGGAASIACITEREREIALKAARTMALDVAGVDILRAERGPLVMEVNASPGLEGIEKTTGVDIAGKMIRWIERHATPEFCLKTGG</sequence>
<feature type="chain" id="PRO_1000194369" description="Ribosomal protein bS6--L-glutamate ligase">
    <location>
        <begin position="1"/>
        <end position="300"/>
    </location>
</feature>
<feature type="domain" description="ATP-grasp" evidence="1">
    <location>
        <begin position="104"/>
        <end position="287"/>
    </location>
</feature>
<feature type="binding site" evidence="1">
    <location>
        <position position="141"/>
    </location>
    <ligand>
        <name>ATP</name>
        <dbReference type="ChEBI" id="CHEBI:30616"/>
    </ligand>
</feature>
<feature type="binding site" evidence="1">
    <location>
        <begin position="178"/>
        <end position="179"/>
    </location>
    <ligand>
        <name>ATP</name>
        <dbReference type="ChEBI" id="CHEBI:30616"/>
    </ligand>
</feature>
<feature type="binding site" evidence="1">
    <location>
        <position position="187"/>
    </location>
    <ligand>
        <name>ATP</name>
        <dbReference type="ChEBI" id="CHEBI:30616"/>
    </ligand>
</feature>
<feature type="binding site" evidence="1">
    <location>
        <begin position="211"/>
        <end position="213"/>
    </location>
    <ligand>
        <name>ATP</name>
        <dbReference type="ChEBI" id="CHEBI:30616"/>
    </ligand>
</feature>
<feature type="binding site" evidence="1">
    <location>
        <position position="248"/>
    </location>
    <ligand>
        <name>Mg(2+)</name>
        <dbReference type="ChEBI" id="CHEBI:18420"/>
        <label>1</label>
    </ligand>
</feature>
<feature type="binding site" evidence="1">
    <location>
        <position position="248"/>
    </location>
    <ligand>
        <name>Mn(2+)</name>
        <dbReference type="ChEBI" id="CHEBI:29035"/>
        <label>1</label>
    </ligand>
</feature>
<feature type="binding site" evidence="1">
    <location>
        <position position="260"/>
    </location>
    <ligand>
        <name>Mg(2+)</name>
        <dbReference type="ChEBI" id="CHEBI:18420"/>
        <label>1</label>
    </ligand>
</feature>
<feature type="binding site" evidence="1">
    <location>
        <position position="260"/>
    </location>
    <ligand>
        <name>Mg(2+)</name>
        <dbReference type="ChEBI" id="CHEBI:18420"/>
        <label>2</label>
    </ligand>
</feature>
<feature type="binding site" evidence="1">
    <location>
        <position position="260"/>
    </location>
    <ligand>
        <name>Mn(2+)</name>
        <dbReference type="ChEBI" id="CHEBI:29035"/>
        <label>1</label>
    </ligand>
</feature>
<feature type="binding site" evidence="1">
    <location>
        <position position="260"/>
    </location>
    <ligand>
        <name>Mn(2+)</name>
        <dbReference type="ChEBI" id="CHEBI:29035"/>
        <label>2</label>
    </ligand>
</feature>
<feature type="binding site" evidence="1">
    <location>
        <position position="262"/>
    </location>
    <ligand>
        <name>Mg(2+)</name>
        <dbReference type="ChEBI" id="CHEBI:18420"/>
        <label>2</label>
    </ligand>
</feature>
<feature type="binding site" evidence="1">
    <location>
        <position position="262"/>
    </location>
    <ligand>
        <name>Mn(2+)</name>
        <dbReference type="ChEBI" id="CHEBI:29035"/>
        <label>2</label>
    </ligand>
</feature>
<organism>
    <name type="scientific">Escherichia fergusonii (strain ATCC 35469 / DSM 13698 / CCUG 18766 / IAM 14443 / JCM 21226 / LMG 7866 / NBRC 102419 / NCTC 12128 / CDC 0568-73)</name>
    <dbReference type="NCBI Taxonomy" id="585054"/>
    <lineage>
        <taxon>Bacteria</taxon>
        <taxon>Pseudomonadati</taxon>
        <taxon>Pseudomonadota</taxon>
        <taxon>Gammaproteobacteria</taxon>
        <taxon>Enterobacterales</taxon>
        <taxon>Enterobacteriaceae</taxon>
        <taxon>Escherichia</taxon>
    </lineage>
</organism>